<gene>
    <name evidence="4" type="primary">ABF62C</name>
</gene>
<proteinExistence type="evidence at protein level"/>
<keyword id="KW-0119">Carbohydrate metabolism</keyword>
<keyword id="KW-0326">Glycosidase</keyword>
<keyword id="KW-0378">Hydrolase</keyword>
<keyword id="KW-0624">Polysaccharide degradation</keyword>
<keyword id="KW-0964">Secreted</keyword>
<keyword id="KW-0732">Signal</keyword>
<keyword id="KW-0858">Xylan degradation</keyword>
<reference key="1">
    <citation type="journal article" date="2018" name="Appl. Biochem. Biotechnol.">
        <title>Characterization of two new endo-beta-1,4-xylanases from Eupenicillium parvum 4-14 and their applications for production of feruloylated oligosaccharides.</title>
        <authorList>
            <person name="Long L."/>
            <person name="Xu M."/>
            <person name="Shi Y."/>
            <person name="Lin Q."/>
            <person name="Wang J."/>
            <person name="Ding S."/>
        </authorList>
    </citation>
    <scope>NUCLEOTIDE SEQUENCE [MRNA]</scope>
    <source>
        <strain>CCTCC M2015404 / 4-14</strain>
    </source>
</reference>
<reference key="2">
    <citation type="journal article" date="2024" name="Int. J. Biol. Macromol.">
        <title>A novel cellulolytic/xylanolytic SbAA14 from Sordaria brevicollis with a branched chain preference and its synergistic effects with glycoside hydrolases on lignocellulose.</title>
        <authorList>
            <person name="Chen X."/>
            <person name="Zhang X."/>
            <person name="Zhao X."/>
            <person name="Zhang P."/>
            <person name="Long L."/>
            <person name="Ding S."/>
        </authorList>
    </citation>
    <scope>FUNCTION</scope>
    <scope>CATALYTIC ACTIVITY</scope>
    <scope>BIOTECHNOLOGY</scope>
</reference>
<name>AB62C_PENPR</name>
<sequence length="328" mass="35390">MRFLKAKAGLVASGAFLLASVPVVAADCALPSTYSWTSTGPLANPKSGWTAIKDFSNVVFNNNHIVYASTTDANGNYGSMNFGTFSDWSGMASASQNKMSFSAVAPTLFYFQPKNIWVLAYQWGSSTFTYRTSNDPTNANGWSSEQALFSGQITGSSTGAIDQTLIGDSTHMYLFFAGDNGKIYRSSMPINNFPGNFGTSSEVVLSDSQNNLFEAVQVYTVKGQNKYLMIVEAIGSQGRYFRSFTATSLGGSWTPQATSESQPFAGKANSGATWTNDISHGDLVRTNPDQTMTIDPCNLQFLYQGKNPSAGGNYNTLPWRPGVLTLKN</sequence>
<dbReference type="EC" id="3.2.1.55" evidence="2"/>
<dbReference type="EMBL" id="MN855573">
    <property type="protein sequence ID" value="QNR55964.1"/>
    <property type="molecule type" value="mRNA"/>
</dbReference>
<dbReference type="SMR" id="A0A7H0XJI9"/>
<dbReference type="GO" id="GO:0005576">
    <property type="term" value="C:extracellular region"/>
    <property type="evidence" value="ECO:0007669"/>
    <property type="project" value="UniProtKB-SubCell"/>
</dbReference>
<dbReference type="GO" id="GO:0046556">
    <property type="term" value="F:alpha-L-arabinofuranosidase activity"/>
    <property type="evidence" value="ECO:0007669"/>
    <property type="project" value="UniProtKB-EC"/>
</dbReference>
<dbReference type="GO" id="GO:0046373">
    <property type="term" value="P:L-arabinose metabolic process"/>
    <property type="evidence" value="ECO:0007669"/>
    <property type="project" value="InterPro"/>
</dbReference>
<dbReference type="GO" id="GO:0045493">
    <property type="term" value="P:xylan catabolic process"/>
    <property type="evidence" value="ECO:0007669"/>
    <property type="project" value="UniProtKB-KW"/>
</dbReference>
<dbReference type="CDD" id="cd08987">
    <property type="entry name" value="GH62"/>
    <property type="match status" value="1"/>
</dbReference>
<dbReference type="Gene3D" id="2.115.10.20">
    <property type="entry name" value="Glycosyl hydrolase domain, family 43"/>
    <property type="match status" value="1"/>
</dbReference>
<dbReference type="InterPro" id="IPR005193">
    <property type="entry name" value="GH62_arabinosidase"/>
</dbReference>
<dbReference type="InterPro" id="IPR023296">
    <property type="entry name" value="Glyco_hydro_beta-prop_sf"/>
</dbReference>
<dbReference type="PANTHER" id="PTHR40631">
    <property type="entry name" value="ALPHA-L-ARABINOFURANOSIDASE AXHA-2-RELATED"/>
    <property type="match status" value="1"/>
</dbReference>
<dbReference type="PANTHER" id="PTHR40631:SF1">
    <property type="entry name" value="ALPHA-L-ARABINOFURANOSIDASE AXHA-2-RELATED"/>
    <property type="match status" value="1"/>
</dbReference>
<dbReference type="Pfam" id="PF03664">
    <property type="entry name" value="Glyco_hydro_62"/>
    <property type="match status" value="1"/>
</dbReference>
<dbReference type="SUPFAM" id="SSF75005">
    <property type="entry name" value="Arabinanase/levansucrase/invertase"/>
    <property type="match status" value="1"/>
</dbReference>
<protein>
    <recommendedName>
        <fullName evidence="4">Alpha-L-arabinofuranosidase C</fullName>
        <ecNumber evidence="2">3.2.1.55</ecNumber>
    </recommendedName>
    <alternativeName>
        <fullName evidence="5">Arabinoxylan arabinofuranohydrolase C</fullName>
    </alternativeName>
</protein>
<accession>A0A7H0XJI9</accession>
<feature type="signal peptide" evidence="1">
    <location>
        <begin position="1"/>
        <end position="26"/>
    </location>
</feature>
<feature type="chain" id="PRO_5028944082" description="Alpha-L-arabinofuranosidase C">
    <location>
        <begin position="27"/>
        <end position="328"/>
    </location>
</feature>
<evidence type="ECO:0000255" key="1"/>
<evidence type="ECO:0000269" key="2">
    <source>
    </source>
</evidence>
<evidence type="ECO:0000269" key="3">
    <source>
    </source>
</evidence>
<evidence type="ECO:0000303" key="4">
    <source>
    </source>
</evidence>
<evidence type="ECO:0000305" key="5"/>
<evidence type="ECO:0000305" key="6">
    <source>
    </source>
</evidence>
<comment type="function">
    <text evidence="3">Alpha-L-arabinofuranosidase involved in the hydrolysis of xylan, a major structural heterogeneous polysaccharide found in plant biomass representing the second most abundant polysaccharide in the biosphere, after cellulose (PubMed:38228212). Debranches beta-cellulose by removing 1,3 monosubstituted arabinose (PubMed:38228212).</text>
</comment>
<comment type="catalytic activity">
    <reaction evidence="3">
        <text>Hydrolysis of terminal non-reducing alpha-L-arabinofuranoside residues in alpha-L-arabinosides.</text>
        <dbReference type="EC" id="3.2.1.55"/>
    </reaction>
</comment>
<comment type="subcellular location">
    <subcellularLocation>
        <location evidence="6">Secreted</location>
    </subcellularLocation>
</comment>
<comment type="biotechnology">
    <text evidence="3">Synergistic reactions with other polysaccharadide degrading enzymes such as lytic polysaccharide monooxygenases (LPMOs) are important for industrial applications.</text>
</comment>
<comment type="similarity">
    <text evidence="5">Belongs to the glycosyl hydrolase 62 family.</text>
</comment>
<organism>
    <name type="scientific">Penicillium parvum</name>
    <name type="common">Eupenicillium parvum</name>
    <dbReference type="NCBI Taxonomy" id="70113"/>
    <lineage>
        <taxon>Eukaryota</taxon>
        <taxon>Fungi</taxon>
        <taxon>Dikarya</taxon>
        <taxon>Ascomycota</taxon>
        <taxon>Pezizomycotina</taxon>
        <taxon>Eurotiomycetes</taxon>
        <taxon>Eurotiomycetidae</taxon>
        <taxon>Eurotiales</taxon>
        <taxon>Aspergillaceae</taxon>
        <taxon>Penicillium</taxon>
    </lineage>
</organism>